<organism>
    <name type="scientific">Listeria innocua serovar 6a (strain ATCC BAA-680 / CLIP 11262)</name>
    <dbReference type="NCBI Taxonomy" id="272626"/>
    <lineage>
        <taxon>Bacteria</taxon>
        <taxon>Bacillati</taxon>
        <taxon>Bacillota</taxon>
        <taxon>Bacilli</taxon>
        <taxon>Bacillales</taxon>
        <taxon>Listeriaceae</taxon>
        <taxon>Listeria</taxon>
    </lineage>
</organism>
<name>FLUC1_LISIN</name>
<accession>Q929T7</accession>
<sequence>MLINFLLVGFGASLGAMLRYGISIFVKSKWKTDFPYATFFINITGSFLLGFLVSTALGPMWQLFLGTGFMGGYTTFSTFKVESMELKWKANFQVLFSYVGLTYLCGLIAAFIGIMLGV</sequence>
<comment type="function">
    <text evidence="1">Fluoride-specific ion channel. Important for reducing fluoride concentration in the cell, thus reducing its toxicity.</text>
</comment>
<comment type="catalytic activity">
    <reaction evidence="1">
        <text>fluoride(in) = fluoride(out)</text>
        <dbReference type="Rhea" id="RHEA:76159"/>
        <dbReference type="ChEBI" id="CHEBI:17051"/>
    </reaction>
    <physiologicalReaction direction="left-to-right" evidence="1">
        <dbReference type="Rhea" id="RHEA:76160"/>
    </physiologicalReaction>
</comment>
<comment type="activity regulation">
    <text evidence="1">Na(+) is not transported, but it plays an essential structural role and its presence is essential for fluoride channel function.</text>
</comment>
<comment type="subcellular location">
    <subcellularLocation>
        <location evidence="1">Cell membrane</location>
        <topology evidence="1">Multi-pass membrane protein</topology>
    </subcellularLocation>
</comment>
<comment type="similarity">
    <text evidence="1">Belongs to the fluoride channel Fluc/FEX (TC 1.A.43) family.</text>
</comment>
<reference key="1">
    <citation type="journal article" date="2001" name="Science">
        <title>Comparative genomics of Listeria species.</title>
        <authorList>
            <person name="Glaser P."/>
            <person name="Frangeul L."/>
            <person name="Buchrieser C."/>
            <person name="Rusniok C."/>
            <person name="Amend A."/>
            <person name="Baquero F."/>
            <person name="Berche P."/>
            <person name="Bloecker H."/>
            <person name="Brandt P."/>
            <person name="Chakraborty T."/>
            <person name="Charbit A."/>
            <person name="Chetouani F."/>
            <person name="Couve E."/>
            <person name="de Daruvar A."/>
            <person name="Dehoux P."/>
            <person name="Domann E."/>
            <person name="Dominguez-Bernal G."/>
            <person name="Duchaud E."/>
            <person name="Durant L."/>
            <person name="Dussurget O."/>
            <person name="Entian K.-D."/>
            <person name="Fsihi H."/>
            <person name="Garcia-del Portillo F."/>
            <person name="Garrido P."/>
            <person name="Gautier L."/>
            <person name="Goebel W."/>
            <person name="Gomez-Lopez N."/>
            <person name="Hain T."/>
            <person name="Hauf J."/>
            <person name="Jackson D."/>
            <person name="Jones L.-M."/>
            <person name="Kaerst U."/>
            <person name="Kreft J."/>
            <person name="Kuhn M."/>
            <person name="Kunst F."/>
            <person name="Kurapkat G."/>
            <person name="Madueno E."/>
            <person name="Maitournam A."/>
            <person name="Mata Vicente J."/>
            <person name="Ng E."/>
            <person name="Nedjari H."/>
            <person name="Nordsiek G."/>
            <person name="Novella S."/>
            <person name="de Pablos B."/>
            <person name="Perez-Diaz J.-C."/>
            <person name="Purcell R."/>
            <person name="Remmel B."/>
            <person name="Rose M."/>
            <person name="Schlueter T."/>
            <person name="Simoes N."/>
            <person name="Tierrez A."/>
            <person name="Vazquez-Boland J.-A."/>
            <person name="Voss H."/>
            <person name="Wehland J."/>
            <person name="Cossart P."/>
        </authorList>
    </citation>
    <scope>NUCLEOTIDE SEQUENCE [LARGE SCALE GENOMIC DNA]</scope>
    <source>
        <strain>ATCC BAA-680 / CLIP 11262</strain>
    </source>
</reference>
<evidence type="ECO:0000255" key="1">
    <source>
        <dbReference type="HAMAP-Rule" id="MF_00454"/>
    </source>
</evidence>
<gene>
    <name evidence="1" type="primary">fluC1</name>
    <name evidence="1" type="synonym">crcB1</name>
    <name type="ordered locus">lin2187</name>
</gene>
<proteinExistence type="inferred from homology"/>
<keyword id="KW-1003">Cell membrane</keyword>
<keyword id="KW-0407">Ion channel</keyword>
<keyword id="KW-0406">Ion transport</keyword>
<keyword id="KW-0472">Membrane</keyword>
<keyword id="KW-0479">Metal-binding</keyword>
<keyword id="KW-0915">Sodium</keyword>
<keyword id="KW-0812">Transmembrane</keyword>
<keyword id="KW-1133">Transmembrane helix</keyword>
<keyword id="KW-0813">Transport</keyword>
<protein>
    <recommendedName>
        <fullName evidence="1">Fluoride-specific ion channel FluC 1</fullName>
    </recommendedName>
</protein>
<dbReference type="EMBL" id="AL596171">
    <property type="protein sequence ID" value="CAC97416.1"/>
    <property type="molecule type" value="Genomic_DNA"/>
</dbReference>
<dbReference type="PIR" id="AH1705">
    <property type="entry name" value="AH1705"/>
</dbReference>
<dbReference type="RefSeq" id="WP_003769642.1">
    <property type="nucleotide sequence ID" value="NC_003212.1"/>
</dbReference>
<dbReference type="SMR" id="Q929T7"/>
<dbReference type="STRING" id="272626.gene:17566544"/>
<dbReference type="KEGG" id="lin:lin2187"/>
<dbReference type="eggNOG" id="COG0239">
    <property type="taxonomic scope" value="Bacteria"/>
</dbReference>
<dbReference type="HOGENOM" id="CLU_114342_2_3_9"/>
<dbReference type="OrthoDB" id="9815830at2"/>
<dbReference type="Proteomes" id="UP000002513">
    <property type="component" value="Chromosome"/>
</dbReference>
<dbReference type="GO" id="GO:0005886">
    <property type="term" value="C:plasma membrane"/>
    <property type="evidence" value="ECO:0007669"/>
    <property type="project" value="UniProtKB-SubCell"/>
</dbReference>
<dbReference type="GO" id="GO:0062054">
    <property type="term" value="F:fluoride channel activity"/>
    <property type="evidence" value="ECO:0007669"/>
    <property type="project" value="UniProtKB-UniRule"/>
</dbReference>
<dbReference type="GO" id="GO:0046872">
    <property type="term" value="F:metal ion binding"/>
    <property type="evidence" value="ECO:0007669"/>
    <property type="project" value="UniProtKB-KW"/>
</dbReference>
<dbReference type="GO" id="GO:0140114">
    <property type="term" value="P:cellular detoxification of fluoride"/>
    <property type="evidence" value="ECO:0007669"/>
    <property type="project" value="UniProtKB-UniRule"/>
</dbReference>
<dbReference type="HAMAP" id="MF_00454">
    <property type="entry name" value="FluC"/>
    <property type="match status" value="1"/>
</dbReference>
<dbReference type="InterPro" id="IPR003691">
    <property type="entry name" value="FluC"/>
</dbReference>
<dbReference type="NCBIfam" id="TIGR00494">
    <property type="entry name" value="crcB"/>
    <property type="match status" value="1"/>
</dbReference>
<dbReference type="NCBIfam" id="NF010801">
    <property type="entry name" value="PRK14205.1"/>
    <property type="match status" value="1"/>
</dbReference>
<dbReference type="NCBIfam" id="NF010810">
    <property type="entry name" value="PRK14214.1"/>
    <property type="match status" value="1"/>
</dbReference>
<dbReference type="NCBIfam" id="NF010816">
    <property type="entry name" value="PRK14220.1"/>
    <property type="match status" value="1"/>
</dbReference>
<dbReference type="PANTHER" id="PTHR28259">
    <property type="entry name" value="FLUORIDE EXPORT PROTEIN 1-RELATED"/>
    <property type="match status" value="1"/>
</dbReference>
<dbReference type="PANTHER" id="PTHR28259:SF16">
    <property type="entry name" value="FLUORIDE-SPECIFIC ION CHANNEL FLUC 2"/>
    <property type="match status" value="1"/>
</dbReference>
<dbReference type="Pfam" id="PF02537">
    <property type="entry name" value="CRCB"/>
    <property type="match status" value="1"/>
</dbReference>
<feature type="chain" id="PRO_0000110125" description="Fluoride-specific ion channel FluC 1">
    <location>
        <begin position="1"/>
        <end position="118"/>
    </location>
</feature>
<feature type="transmembrane region" description="Helical" evidence="1">
    <location>
        <begin position="5"/>
        <end position="25"/>
    </location>
</feature>
<feature type="transmembrane region" description="Helical" evidence="1">
    <location>
        <begin position="39"/>
        <end position="59"/>
    </location>
</feature>
<feature type="transmembrane region" description="Helical" evidence="1">
    <location>
        <begin position="61"/>
        <end position="81"/>
    </location>
</feature>
<feature type="transmembrane region" description="Helical" evidence="1">
    <location>
        <begin position="98"/>
        <end position="118"/>
    </location>
</feature>
<feature type="binding site" evidence="1">
    <location>
        <position position="71"/>
    </location>
    <ligand>
        <name>Na(+)</name>
        <dbReference type="ChEBI" id="CHEBI:29101"/>
        <note>structural</note>
    </ligand>
</feature>
<feature type="binding site" evidence="1">
    <location>
        <position position="74"/>
    </location>
    <ligand>
        <name>Na(+)</name>
        <dbReference type="ChEBI" id="CHEBI:29101"/>
        <note>structural</note>
    </ligand>
</feature>